<sequence length="264" mass="28324">MNRSTISPVEARQQFRAGLIQPTSGWSAGFAQANLISMPQDLAYDFLLFAQRNPKPCPILEVLNAGETFGGIFGSNATEADIRTDAPQYRIYAHGELIDSPASAVDYWRDDLVSFIIGCSFTFEHPMVQAGVPVRHLEAGRNVPMYETSLACRPAGSLSGNLVVSLRMIPASQVADAVRITSRYPAVHGAPVHIGDPSLIGIDDINNPDFGDAPLSEPSDVPVFWACGVTPQAMVMSSKPPLAITHAPGHMLITDAPDLGFQVP</sequence>
<proteinExistence type="inferred from homology"/>
<comment type="similarity">
    <text evidence="1">Belongs to the D-glutamate cyclase family.</text>
</comment>
<name>Y2544_CORGL</name>
<evidence type="ECO:0000255" key="1">
    <source>
        <dbReference type="HAMAP-Rule" id="MF_01830"/>
    </source>
</evidence>
<keyword id="KW-0456">Lyase</keyword>
<keyword id="KW-1185">Reference proteome</keyword>
<dbReference type="EC" id="4.2.1.-" evidence="1"/>
<dbReference type="EMBL" id="BA000036">
    <property type="protein sequence ID" value="BAB99937.1"/>
    <property type="molecule type" value="Genomic_DNA"/>
</dbReference>
<dbReference type="EMBL" id="BX927155">
    <property type="protein sequence ID" value="CAF21206.1"/>
    <property type="molecule type" value="Genomic_DNA"/>
</dbReference>
<dbReference type="RefSeq" id="NP_601744.1">
    <property type="nucleotide sequence ID" value="NC_003450.3"/>
</dbReference>
<dbReference type="RefSeq" id="WP_011015201.1">
    <property type="nucleotide sequence ID" value="NC_006958.1"/>
</dbReference>
<dbReference type="SMR" id="Q8NMM7"/>
<dbReference type="STRING" id="196627.cg2803"/>
<dbReference type="KEGG" id="cgb:cg2803"/>
<dbReference type="KEGG" id="cgl:Cgl2544"/>
<dbReference type="PATRIC" id="fig|196627.13.peg.2477"/>
<dbReference type="eggNOG" id="COG4336">
    <property type="taxonomic scope" value="Bacteria"/>
</dbReference>
<dbReference type="HOGENOM" id="CLU_059759_0_0_11"/>
<dbReference type="OrthoDB" id="149585at2"/>
<dbReference type="BioCyc" id="CORYNE:G18NG-12149-MONOMER"/>
<dbReference type="Proteomes" id="UP000000582">
    <property type="component" value="Chromosome"/>
</dbReference>
<dbReference type="Proteomes" id="UP000001009">
    <property type="component" value="Chromosome"/>
</dbReference>
<dbReference type="GO" id="GO:0016829">
    <property type="term" value="F:lyase activity"/>
    <property type="evidence" value="ECO:0007669"/>
    <property type="project" value="UniProtKB-KW"/>
</dbReference>
<dbReference type="FunFam" id="3.30.2040.10:FF:000001">
    <property type="entry name" value="D-glutamate cyclase, mitochondrial"/>
    <property type="match status" value="1"/>
</dbReference>
<dbReference type="Gene3D" id="3.40.1640.10">
    <property type="entry name" value="PSTPO5379-like"/>
    <property type="match status" value="1"/>
</dbReference>
<dbReference type="Gene3D" id="3.30.2040.10">
    <property type="entry name" value="PSTPO5379-like domain"/>
    <property type="match status" value="1"/>
</dbReference>
<dbReference type="HAMAP" id="MF_01830">
    <property type="entry name" value="Hydro_lyase"/>
    <property type="match status" value="1"/>
</dbReference>
<dbReference type="InterPro" id="IPR009906">
    <property type="entry name" value="D-Glu_cyclase"/>
</dbReference>
<dbReference type="InterPro" id="IPR038021">
    <property type="entry name" value="Putative_hydro-lyase"/>
</dbReference>
<dbReference type="InterPro" id="IPR016938">
    <property type="entry name" value="UPF0317"/>
</dbReference>
<dbReference type="NCBIfam" id="NF003969">
    <property type="entry name" value="PRK05463.1"/>
    <property type="match status" value="1"/>
</dbReference>
<dbReference type="PANTHER" id="PTHR32022">
    <property type="entry name" value="D-GLUTAMATE CYCLASE, MITOCHONDRIAL"/>
    <property type="match status" value="1"/>
</dbReference>
<dbReference type="PANTHER" id="PTHR32022:SF10">
    <property type="entry name" value="D-GLUTAMATE CYCLASE, MITOCHONDRIAL"/>
    <property type="match status" value="1"/>
</dbReference>
<dbReference type="Pfam" id="PF07286">
    <property type="entry name" value="D-Glu_cyclase"/>
    <property type="match status" value="1"/>
</dbReference>
<dbReference type="PIRSF" id="PIRSF029755">
    <property type="entry name" value="UCP029755"/>
    <property type="match status" value="1"/>
</dbReference>
<dbReference type="SUPFAM" id="SSF160920">
    <property type="entry name" value="PSTPO5379-like"/>
    <property type="match status" value="1"/>
</dbReference>
<reference key="1">
    <citation type="journal article" date="2003" name="Appl. Microbiol. Biotechnol.">
        <title>The Corynebacterium glutamicum genome: features and impacts on biotechnological processes.</title>
        <authorList>
            <person name="Ikeda M."/>
            <person name="Nakagawa S."/>
        </authorList>
    </citation>
    <scope>NUCLEOTIDE SEQUENCE [LARGE SCALE GENOMIC DNA]</scope>
    <source>
        <strain>ATCC 13032 / DSM 20300 / JCM 1318 / BCRC 11384 / CCUG 27702 / LMG 3730 / NBRC 12168 / NCIMB 10025 / NRRL B-2784 / 534</strain>
    </source>
</reference>
<reference key="2">
    <citation type="journal article" date="2003" name="J. Biotechnol.">
        <title>The complete Corynebacterium glutamicum ATCC 13032 genome sequence and its impact on the production of L-aspartate-derived amino acids and vitamins.</title>
        <authorList>
            <person name="Kalinowski J."/>
            <person name="Bathe B."/>
            <person name="Bartels D."/>
            <person name="Bischoff N."/>
            <person name="Bott M."/>
            <person name="Burkovski A."/>
            <person name="Dusch N."/>
            <person name="Eggeling L."/>
            <person name="Eikmanns B.J."/>
            <person name="Gaigalat L."/>
            <person name="Goesmann A."/>
            <person name="Hartmann M."/>
            <person name="Huthmacher K."/>
            <person name="Kraemer R."/>
            <person name="Linke B."/>
            <person name="McHardy A.C."/>
            <person name="Meyer F."/>
            <person name="Moeckel B."/>
            <person name="Pfefferle W."/>
            <person name="Puehler A."/>
            <person name="Rey D.A."/>
            <person name="Rueckert C."/>
            <person name="Rupp O."/>
            <person name="Sahm H."/>
            <person name="Wendisch V.F."/>
            <person name="Wiegraebe I."/>
            <person name="Tauch A."/>
        </authorList>
    </citation>
    <scope>NUCLEOTIDE SEQUENCE [LARGE SCALE GENOMIC DNA]</scope>
    <source>
        <strain>ATCC 13032 / DSM 20300 / JCM 1318 / BCRC 11384 / CCUG 27702 / LMG 3730 / NBRC 12168 / NCIMB 10025 / NRRL B-2784 / 534</strain>
    </source>
</reference>
<feature type="chain" id="PRO_0000217166" description="Putative hydro-lyase Cgl2544/cg2803">
    <location>
        <begin position="1"/>
        <end position="264"/>
    </location>
</feature>
<gene>
    <name type="ordered locus">Cgl2544</name>
    <name type="ordered locus">cg2803</name>
</gene>
<organism>
    <name type="scientific">Corynebacterium glutamicum (strain ATCC 13032 / DSM 20300 / JCM 1318 / BCRC 11384 / CCUG 27702 / LMG 3730 / NBRC 12168 / NCIMB 10025 / NRRL B-2784 / 534)</name>
    <dbReference type="NCBI Taxonomy" id="196627"/>
    <lineage>
        <taxon>Bacteria</taxon>
        <taxon>Bacillati</taxon>
        <taxon>Actinomycetota</taxon>
        <taxon>Actinomycetes</taxon>
        <taxon>Mycobacteriales</taxon>
        <taxon>Corynebacteriaceae</taxon>
        <taxon>Corynebacterium</taxon>
    </lineage>
</organism>
<accession>Q8NMM7</accession>
<protein>
    <recommendedName>
        <fullName evidence="1">Putative hydro-lyase Cgl2544/cg2803</fullName>
        <ecNumber evidence="1">4.2.1.-</ecNumber>
    </recommendedName>
</protein>